<dbReference type="EMBL" id="Z49260">
    <property type="protein sequence ID" value="CAA89247.1"/>
    <property type="molecule type" value="Genomic_DNA"/>
</dbReference>
<dbReference type="EMBL" id="AY557973">
    <property type="protein sequence ID" value="AAS56299.1"/>
    <property type="molecule type" value="Genomic_DNA"/>
</dbReference>
<dbReference type="EMBL" id="M88172">
    <property type="protein sequence ID" value="AAA35221.1"/>
    <property type="molecule type" value="Genomic_DNA"/>
</dbReference>
<dbReference type="EMBL" id="BK006946">
    <property type="protein sequence ID" value="DAA10164.1"/>
    <property type="molecule type" value="Genomic_DNA"/>
</dbReference>
<dbReference type="PIR" id="S54476">
    <property type="entry name" value="S54476"/>
</dbReference>
<dbReference type="RefSeq" id="NP_013991.1">
    <property type="nucleotide sequence ID" value="NM_001182771.1"/>
</dbReference>
<dbReference type="PDB" id="2MYX">
    <property type="method" value="NMR"/>
    <property type="chains" value="A=45-115"/>
</dbReference>
<dbReference type="PDB" id="4JQU">
    <property type="method" value="X-ray"/>
    <property type="resolution" value="1.81 A"/>
    <property type="chains" value="B=151-203"/>
</dbReference>
<dbReference type="PDBsum" id="2MYX"/>
<dbReference type="PDBsum" id="4JQU"/>
<dbReference type="SMR" id="P38428"/>
<dbReference type="BioGRID" id="35442">
    <property type="interactions" value="192"/>
</dbReference>
<dbReference type="ComplexPortal" id="CPX-2948">
    <property type="entry name" value="CUE1-UBC7 ubiquitin-conjugating enzyme complex"/>
</dbReference>
<dbReference type="DIP" id="DIP-4399N"/>
<dbReference type="FunCoup" id="P38428">
    <property type="interactions" value="139"/>
</dbReference>
<dbReference type="IntAct" id="P38428">
    <property type="interactions" value="17"/>
</dbReference>
<dbReference type="MINT" id="P38428"/>
<dbReference type="STRING" id="4932.YMR264W"/>
<dbReference type="iPTMnet" id="P38428"/>
<dbReference type="PaxDb" id="4932-YMR264W"/>
<dbReference type="PeptideAtlas" id="P38428"/>
<dbReference type="EnsemblFungi" id="YMR264W_mRNA">
    <property type="protein sequence ID" value="YMR264W"/>
    <property type="gene ID" value="YMR264W"/>
</dbReference>
<dbReference type="GeneID" id="855306"/>
<dbReference type="KEGG" id="sce:YMR264W"/>
<dbReference type="AGR" id="SGD:S000004877"/>
<dbReference type="SGD" id="S000004877">
    <property type="gene designation" value="CUE1"/>
</dbReference>
<dbReference type="VEuPathDB" id="FungiDB:YMR264W"/>
<dbReference type="eggNOG" id="ENOG502S35Z">
    <property type="taxonomic scope" value="Eukaryota"/>
</dbReference>
<dbReference type="HOGENOM" id="CLU_115919_0_0_1"/>
<dbReference type="InParanoid" id="P38428"/>
<dbReference type="OMA" id="TVNRFME"/>
<dbReference type="OrthoDB" id="3824970at2759"/>
<dbReference type="BioCyc" id="YEAST:G3O-32938-MONOMER"/>
<dbReference type="BioGRID-ORCS" id="855306">
    <property type="hits" value="2 hits in 10 CRISPR screens"/>
</dbReference>
<dbReference type="EvolutionaryTrace" id="P38428"/>
<dbReference type="PRO" id="PR:P38428"/>
<dbReference type="Proteomes" id="UP000002311">
    <property type="component" value="Chromosome XIII"/>
</dbReference>
<dbReference type="RNAct" id="P38428">
    <property type="molecule type" value="protein"/>
</dbReference>
<dbReference type="GO" id="GO:1990389">
    <property type="term" value="C:CUE1-UBC7 ubiquitin-conjugating enzyme complex"/>
    <property type="evidence" value="ECO:0000353"/>
    <property type="project" value="ComplexPortal"/>
</dbReference>
<dbReference type="GO" id="GO:0000837">
    <property type="term" value="C:Doa10p ubiquitin ligase complex"/>
    <property type="evidence" value="ECO:0000314"/>
    <property type="project" value="SGD"/>
</dbReference>
<dbReference type="GO" id="GO:0005783">
    <property type="term" value="C:endoplasmic reticulum"/>
    <property type="evidence" value="ECO:0007005"/>
    <property type="project" value="SGD"/>
</dbReference>
<dbReference type="GO" id="GO:0005789">
    <property type="term" value="C:endoplasmic reticulum membrane"/>
    <property type="evidence" value="ECO:0000314"/>
    <property type="project" value="SGD"/>
</dbReference>
<dbReference type="GO" id="GO:0000839">
    <property type="term" value="C:Hrd1p ubiquitin ligase ERAD-L complex"/>
    <property type="evidence" value="ECO:0000314"/>
    <property type="project" value="SGD"/>
</dbReference>
<dbReference type="GO" id="GO:0005739">
    <property type="term" value="C:mitochondrion"/>
    <property type="evidence" value="ECO:0007005"/>
    <property type="project" value="SGD"/>
</dbReference>
<dbReference type="GO" id="GO:0043130">
    <property type="term" value="F:ubiquitin binding"/>
    <property type="evidence" value="ECO:0000314"/>
    <property type="project" value="SGD"/>
</dbReference>
<dbReference type="GO" id="GO:0097027">
    <property type="term" value="F:ubiquitin-protein transferase activator activity"/>
    <property type="evidence" value="ECO:0000314"/>
    <property type="project" value="SGD"/>
</dbReference>
<dbReference type="GO" id="GO:0036503">
    <property type="term" value="P:ERAD pathway"/>
    <property type="evidence" value="ECO:0000315"/>
    <property type="project" value="SGD"/>
</dbReference>
<dbReference type="GO" id="GO:0097051">
    <property type="term" value="P:establishment of protein localization to endoplasmic reticulum membrane"/>
    <property type="evidence" value="ECO:0000315"/>
    <property type="project" value="SGD"/>
</dbReference>
<dbReference type="CDD" id="cd14424">
    <property type="entry name" value="CUE_Cue1p_like"/>
    <property type="match status" value="1"/>
</dbReference>
<dbReference type="FunFam" id="1.10.287.4310:FF:000001">
    <property type="entry name" value="Coupling of ubiquitin conjugation to ER degradation"/>
    <property type="match status" value="1"/>
</dbReference>
<dbReference type="FunFam" id="1.10.8.10:FF:000050">
    <property type="entry name" value="Related to AMFR protein"/>
    <property type="match status" value="1"/>
</dbReference>
<dbReference type="Gene3D" id="1.10.287.4310">
    <property type="match status" value="1"/>
</dbReference>
<dbReference type="Gene3D" id="1.10.8.10">
    <property type="entry name" value="DNA helicase RuvA subunit, C-terminal domain"/>
    <property type="match status" value="1"/>
</dbReference>
<dbReference type="InterPro" id="IPR003892">
    <property type="entry name" value="CUE"/>
</dbReference>
<dbReference type="InterPro" id="IPR041158">
    <property type="entry name" value="Cue1_U7BR"/>
</dbReference>
<dbReference type="Pfam" id="PF02845">
    <property type="entry name" value="CUE"/>
    <property type="match status" value="1"/>
</dbReference>
<dbReference type="Pfam" id="PF18499">
    <property type="entry name" value="Cue1_U7BR"/>
    <property type="match status" value="1"/>
</dbReference>
<dbReference type="SMART" id="SM00546">
    <property type="entry name" value="CUE"/>
    <property type="match status" value="1"/>
</dbReference>
<dbReference type="PROSITE" id="PS51140">
    <property type="entry name" value="CUE"/>
    <property type="match status" value="1"/>
</dbReference>
<comment type="function">
    <text evidence="4 5 6 7 8 9 12 13 14 15 16">Component of the endoplasmic reticulum-associated protein degradation (ERAD) pathway. Recruits the soluble ubiquitin-conjugating enzyme UBC7 to the cytoplasmic face of the endoplasmic reticulum membrane where it functions in degradation of misfolded or regulated proteins localized in the endoplasmic reticulum (ER) lumen or membrane via the ubiquitin-proteasome system. Targets the E2 conjugating enzyme UBC7 to the DOA10 ubiquitin ligase complex, which is part of the ERAD-C pathway responsible for the rapid degradation of membrane proteins with misfolded cytoplasmic domains, and to the HRD1 ubiquitin ligase complex, which is part of the ERAD-L and ERAD-M pathways responsible for the rapid degradation of soluble lumenal and membrane proteins with misfolded lumenal domains (ERAD-L), or ER-membrane proteins with misfolded transmembrane domains (ERAD-M). Also has a role in cold adaptation, perhaps through effects on sterol biosynthesis.</text>
</comment>
<comment type="subunit">
    <text evidence="8 14 16">Forms a heterodimer with UBC7. Interacts with SSM4/DOA10 and UBX2/SEL1.</text>
</comment>
<comment type="interaction">
    <interactant intactId="EBI-27580">
        <id>P38428</id>
    </interactant>
    <interactant intactId="EBI-18208">
        <id>P40318</id>
        <label>SSM4</label>
    </interactant>
    <organismsDiffer>false</organismsDiffer>
    <experiments>2</experiments>
</comment>
<comment type="interaction">
    <interactant intactId="EBI-27580">
        <id>P38428</id>
    </interactant>
    <interactant intactId="EBI-19749">
        <id>Q02159</id>
        <label>UBC7</label>
    </interactant>
    <organismsDiffer>false</organismsDiffer>
    <experiments>2</experiments>
</comment>
<comment type="subcellular location">
    <subcellularLocation>
        <location evidence="10">Endoplasmic reticulum membrane</location>
        <topology evidence="10">Single-pass membrane protein</topology>
    </subcellularLocation>
</comment>
<comment type="miscellaneous">
    <text evidence="11">Present with 589 molecules/cell in log phase SD medium.</text>
</comment>
<comment type="similarity">
    <text evidence="17">Belongs to the CUE1 family.</text>
</comment>
<evidence type="ECO:0000255" key="1"/>
<evidence type="ECO:0000255" key="2">
    <source>
        <dbReference type="PROSITE-ProRule" id="PRU00468"/>
    </source>
</evidence>
<evidence type="ECO:0000256" key="3">
    <source>
        <dbReference type="SAM" id="MobiDB-lite"/>
    </source>
</evidence>
<evidence type="ECO:0000269" key="4">
    <source>
    </source>
</evidence>
<evidence type="ECO:0000269" key="5">
    <source>
    </source>
</evidence>
<evidence type="ECO:0000269" key="6">
    <source>
    </source>
</evidence>
<evidence type="ECO:0000269" key="7">
    <source>
    </source>
</evidence>
<evidence type="ECO:0000269" key="8">
    <source>
    </source>
</evidence>
<evidence type="ECO:0000269" key="9">
    <source>
    </source>
</evidence>
<evidence type="ECO:0000269" key="10">
    <source>
    </source>
</evidence>
<evidence type="ECO:0000269" key="11">
    <source>
    </source>
</evidence>
<evidence type="ECO:0000269" key="12">
    <source>
    </source>
</evidence>
<evidence type="ECO:0000269" key="13">
    <source>
    </source>
</evidence>
<evidence type="ECO:0000269" key="14">
    <source>
    </source>
</evidence>
<evidence type="ECO:0000269" key="15">
    <source>
    </source>
</evidence>
<evidence type="ECO:0000269" key="16">
    <source>
    </source>
</evidence>
<evidence type="ECO:0000305" key="17"/>
<evidence type="ECO:0007829" key="18">
    <source>
        <dbReference type="PDB" id="2MYX"/>
    </source>
</evidence>
<evidence type="ECO:0007829" key="19">
    <source>
        <dbReference type="PDB" id="4JQU"/>
    </source>
</evidence>
<sequence length="203" mass="22763">MEDSRLLITLILVFGVIFLKKFFQSNQHPSAQRLSATGVNAHGRPQGSTQNALRRTGRVNGGHPVTTQMVETVQNLAPNLHPEQIRYSLENTGSVEETVERYLRGDEFSFPPGFEPSRAPMGANAAVDNNAAGGGEFNDPRKKNMICAENLLDKFHVDLNEDMSNLSFKDLDIEERKRLLVWQARKNLETKLQSDKDLQSLLT</sequence>
<name>CUE1_YEAST</name>
<protein>
    <recommendedName>
        <fullName>Coupling of ubiquitin conjugation to ER degradation protein 1</fullName>
    </recommendedName>
    <alternativeName>
        <fullName>Kinetochore-defect suppressor 4</fullName>
    </alternativeName>
</protein>
<organism>
    <name type="scientific">Saccharomyces cerevisiae (strain ATCC 204508 / S288c)</name>
    <name type="common">Baker's yeast</name>
    <dbReference type="NCBI Taxonomy" id="559292"/>
    <lineage>
        <taxon>Eukaryota</taxon>
        <taxon>Fungi</taxon>
        <taxon>Dikarya</taxon>
        <taxon>Ascomycota</taxon>
        <taxon>Saccharomycotina</taxon>
        <taxon>Saccharomycetes</taxon>
        <taxon>Saccharomycetales</taxon>
        <taxon>Saccharomycetaceae</taxon>
        <taxon>Saccharomyces</taxon>
    </lineage>
</organism>
<feature type="chain" id="PRO_0000203346" description="Coupling of ubiquitin conjugation to ER degradation protein 1">
    <location>
        <begin position="1"/>
        <end position="203"/>
    </location>
</feature>
<feature type="topological domain" description="Lumenal" evidence="16">
    <location>
        <begin position="1"/>
        <end position="6"/>
    </location>
</feature>
<feature type="transmembrane region" description="Helical" evidence="1">
    <location>
        <begin position="7"/>
        <end position="23"/>
    </location>
</feature>
<feature type="topological domain" description="Cytoplasmic" evidence="16">
    <location>
        <begin position="24"/>
        <end position="203"/>
    </location>
</feature>
<feature type="domain" description="CUE" evidence="2">
    <location>
        <begin position="65"/>
        <end position="107"/>
    </location>
</feature>
<feature type="region of interest" description="Disordered" evidence="3">
    <location>
        <begin position="36"/>
        <end position="61"/>
    </location>
</feature>
<feature type="sequence conflict" description="In Ref. 4; AAA35221." evidence="17" ref="4">
    <original>S</original>
    <variation>P</variation>
    <location>
        <position position="48"/>
    </location>
</feature>
<feature type="helix" evidence="18">
    <location>
        <begin position="67"/>
        <end position="76"/>
    </location>
</feature>
<feature type="helix" evidence="18">
    <location>
        <begin position="82"/>
        <end position="92"/>
    </location>
</feature>
<feature type="helix" evidence="18">
    <location>
        <begin position="95"/>
        <end position="103"/>
    </location>
</feature>
<feature type="turn" evidence="18">
    <location>
        <begin position="112"/>
        <end position="114"/>
    </location>
</feature>
<feature type="helix" evidence="19">
    <location>
        <begin position="151"/>
        <end position="154"/>
    </location>
</feature>
<feature type="helix" evidence="19">
    <location>
        <begin position="168"/>
        <end position="170"/>
    </location>
</feature>
<feature type="helix" evidence="19">
    <location>
        <begin position="173"/>
        <end position="192"/>
    </location>
</feature>
<feature type="helix" evidence="19">
    <location>
        <begin position="196"/>
        <end position="202"/>
    </location>
</feature>
<keyword id="KW-0002">3D-structure</keyword>
<keyword id="KW-0903">Direct protein sequencing</keyword>
<keyword id="KW-0256">Endoplasmic reticulum</keyword>
<keyword id="KW-0472">Membrane</keyword>
<keyword id="KW-1185">Reference proteome</keyword>
<keyword id="KW-0812">Transmembrane</keyword>
<keyword id="KW-1133">Transmembrane helix</keyword>
<keyword id="KW-0833">Ubl conjugation pathway</keyword>
<gene>
    <name type="primary">CUE1</name>
    <name type="synonym">KIS4</name>
    <name type="ordered locus">YMR264W</name>
    <name type="ORF">YM8156.06</name>
</gene>
<proteinExistence type="evidence at protein level"/>
<reference key="1">
    <citation type="journal article" date="1997" name="Nature">
        <title>The nucleotide sequence of Saccharomyces cerevisiae chromosome XIII.</title>
        <authorList>
            <person name="Bowman S."/>
            <person name="Churcher C.M."/>
            <person name="Badcock K."/>
            <person name="Brown D."/>
            <person name="Chillingworth T."/>
            <person name="Connor R."/>
            <person name="Dedman K."/>
            <person name="Devlin K."/>
            <person name="Gentles S."/>
            <person name="Hamlin N."/>
            <person name="Hunt S."/>
            <person name="Jagels K."/>
            <person name="Lye G."/>
            <person name="Moule S."/>
            <person name="Odell C."/>
            <person name="Pearson D."/>
            <person name="Rajandream M.A."/>
            <person name="Rice P."/>
            <person name="Skelton J."/>
            <person name="Walsh S.V."/>
            <person name="Whitehead S."/>
            <person name="Barrell B.G."/>
        </authorList>
    </citation>
    <scope>NUCLEOTIDE SEQUENCE [LARGE SCALE GENOMIC DNA]</scope>
    <source>
        <strain>ATCC 204508 / S288c</strain>
    </source>
</reference>
<reference key="2">
    <citation type="journal article" date="2014" name="G3 (Bethesda)">
        <title>The reference genome sequence of Saccharomyces cerevisiae: Then and now.</title>
        <authorList>
            <person name="Engel S.R."/>
            <person name="Dietrich F.S."/>
            <person name="Fisk D.G."/>
            <person name="Binkley G."/>
            <person name="Balakrishnan R."/>
            <person name="Costanzo M.C."/>
            <person name="Dwight S.S."/>
            <person name="Hitz B.C."/>
            <person name="Karra K."/>
            <person name="Nash R.S."/>
            <person name="Weng S."/>
            <person name="Wong E.D."/>
            <person name="Lloyd P."/>
            <person name="Skrzypek M.S."/>
            <person name="Miyasato S.R."/>
            <person name="Simison M."/>
            <person name="Cherry J.M."/>
        </authorList>
    </citation>
    <scope>GENOME REANNOTATION</scope>
    <source>
        <strain>ATCC 204508 / S288c</strain>
    </source>
</reference>
<reference key="3">
    <citation type="journal article" date="2007" name="Genome Res.">
        <title>Approaching a complete repository of sequence-verified protein-encoding clones for Saccharomyces cerevisiae.</title>
        <authorList>
            <person name="Hu Y."/>
            <person name="Rolfs A."/>
            <person name="Bhullar B."/>
            <person name="Murthy T.V.S."/>
            <person name="Zhu C."/>
            <person name="Berger M.F."/>
            <person name="Camargo A.A."/>
            <person name="Kelley F."/>
            <person name="McCarron S."/>
            <person name="Jepson D."/>
            <person name="Richardson A."/>
            <person name="Raphael J."/>
            <person name="Moreira D."/>
            <person name="Taycher E."/>
            <person name="Zuo D."/>
            <person name="Mohr S."/>
            <person name="Kane M.F."/>
            <person name="Williamson J."/>
            <person name="Simpson A.J.G."/>
            <person name="Bulyk M.L."/>
            <person name="Harlow E."/>
            <person name="Marsischky G."/>
            <person name="Kolodner R.D."/>
            <person name="LaBaer J."/>
        </authorList>
    </citation>
    <scope>NUCLEOTIDE SEQUENCE [GENOMIC DNA]</scope>
    <source>
        <strain>ATCC 204508 / S288c</strain>
    </source>
</reference>
<reference key="4">
    <citation type="submission" date="1992-06" db="EMBL/GenBank/DDBJ databases">
        <title>A large open reading frame in the yeast genome containing homology to the cif1 gene.</title>
        <authorList>
            <person name="Manning A.M."/>
            <person name="Rosenbloom C.L."/>
            <person name="Beaudet A.L."/>
        </authorList>
    </citation>
    <scope>NUCLEOTIDE SEQUENCE [GENOMIC DNA] OF 1-158</scope>
</reference>
<reference key="5">
    <citation type="journal article" date="1997" name="Science">
        <title>Role of Cue1p in ubiquitination and degradation at the ER surface.</title>
        <authorList>
            <person name="Biederer T."/>
            <person name="Volkwein C."/>
            <person name="Sommer T."/>
        </authorList>
    </citation>
    <scope>PROTEIN SEQUENCE OF 1-29</scope>
    <scope>TOPOLOGY</scope>
    <scope>FUNCTION</scope>
    <scope>INTERACTION WITH UBC7</scope>
</reference>
<reference key="6">
    <citation type="journal article" date="1997" name="Genetics">
        <title>Suppressors of the ndc10-2 mutation: a role for the ubiquitin system in Saccharomyces cerevisiae kinetochore function.</title>
        <authorList>
            <person name="Kopski K.M."/>
            <person name="Huffaker T.C."/>
        </authorList>
    </citation>
    <scope>FUNCTION</scope>
</reference>
<reference key="7">
    <citation type="journal article" date="2000" name="Biochem. J.">
        <title>Proteins of the endoplasmic-reticulum-associated degradation pathway: domain detection and function prediction.</title>
        <authorList>
            <person name="Ponting C.P."/>
        </authorList>
    </citation>
    <scope>DOMAIN</scope>
</reference>
<reference key="8">
    <citation type="journal article" date="2000" name="J. Biol. Chem.">
        <title>Ubiquitin-mediated proteolysis of a short-lived regulatory protein depends on its cellular localization.</title>
        <authorList>
            <person name="Lenk U."/>
            <person name="Sommer T."/>
        </authorList>
    </citation>
    <scope>FUNCTION</scope>
</reference>
<reference key="9">
    <citation type="journal article" date="2000" name="Mol. Cell. Biol.">
        <title>Degradation signals recognized by the Ubc6p-Ubc7p ubiquitin-conjugating enzyme pair.</title>
        <authorList>
            <person name="Gilon T."/>
            <person name="Chomsky O."/>
            <person name="Kulka R.G."/>
        </authorList>
    </citation>
    <scope>FUNCTION</scope>
</reference>
<reference key="10">
    <citation type="journal article" date="2000" name="Nat. Cell Biol.">
        <title>A regulatory link between ER-associated protein degradation and the unfolded-protein response.</title>
        <authorList>
            <person name="Friedlander R."/>
            <person name="Jarosch E."/>
            <person name="Urban J."/>
            <person name="Volkwein C."/>
            <person name="Sommer T."/>
        </authorList>
    </citation>
    <scope>FUNCTION</scope>
</reference>
<reference key="11">
    <citation type="journal article" date="2001" name="EMBO J.">
        <title>Sec61p-independent degradation of the tail-anchored ER membrane protein Ubc6p.</title>
        <authorList>
            <person name="Walter J."/>
            <person name="Urban J."/>
            <person name="Volkwein C."/>
            <person name="Sommer T."/>
        </authorList>
    </citation>
    <scope>FUNCTION</scope>
    <scope>INTERACTION WITH UBC7</scope>
</reference>
<reference key="12">
    <citation type="journal article" date="2001" name="Mol. Cell. Biol.">
        <title>In vivo action of the HRD ubiquitin ligase complex: mechanisms of endoplasmic reticulum quality control and sterol regulation.</title>
        <authorList>
            <person name="Gardner R.G."/>
            <person name="Shearer A.G."/>
            <person name="Hampton R.Y."/>
        </authorList>
    </citation>
    <scope>FUNCTION</scope>
</reference>
<reference key="13">
    <citation type="journal article" date="2002" name="Genetics">
        <title>Mutant membrane protein of the budding yeast spindle pole body is targeted to the endoplasmic reticulum degradation pathway.</title>
        <authorList>
            <person name="McBratney S."/>
            <person name="Winey M."/>
        </authorList>
    </citation>
    <scope>FUNCTION</scope>
</reference>
<reference key="14">
    <citation type="journal article" date="2003" name="EMBO J.">
        <title>A ubiquitin-binding motif required for intramolecular monoubiquitylation, the CUE domain.</title>
        <authorList>
            <person name="Shih S.C."/>
            <person name="Prag G."/>
            <person name="Francis S.A."/>
            <person name="Sutanto M.A."/>
            <person name="Hurley J.H."/>
            <person name="Hicke L."/>
        </authorList>
    </citation>
    <scope>DOMAIN</scope>
</reference>
<reference key="15">
    <citation type="journal article" date="2003" name="Nature">
        <title>Global analysis of protein localization in budding yeast.</title>
        <authorList>
            <person name="Huh W.-K."/>
            <person name="Falvo J.V."/>
            <person name="Gerke L.C."/>
            <person name="Carroll A.S."/>
            <person name="Howson R.W."/>
            <person name="Weissman J.S."/>
            <person name="O'Shea E.K."/>
        </authorList>
    </citation>
    <scope>SUBCELLULAR LOCATION [LARGE SCALE ANALYSIS]</scope>
</reference>
<reference key="16">
    <citation type="journal article" date="2003" name="Nature">
        <title>Global analysis of protein expression in yeast.</title>
        <authorList>
            <person name="Ghaemmaghami S."/>
            <person name="Huh W.-K."/>
            <person name="Bower K."/>
            <person name="Howson R.W."/>
            <person name="Belle A."/>
            <person name="Dephoure N."/>
            <person name="O'Shea E.K."/>
            <person name="Weissman J.S."/>
        </authorList>
    </citation>
    <scope>LEVEL OF PROTEIN EXPRESSION [LARGE SCALE ANALYSIS]</scope>
</reference>
<reference key="17">
    <citation type="journal article" date="2006" name="Cell">
        <title>Distinct ubiquitin-ligase complexes define convergent pathways for the degradation of ER proteins.</title>
        <authorList>
            <person name="Carvalho P."/>
            <person name="Goder V."/>
            <person name="Rapoport T.A."/>
        </authorList>
    </citation>
    <scope>FUNCTION</scope>
    <scope>INTERACTION WITH SSM4 AND UBX2</scope>
</reference>
<reference key="18">
    <citation type="journal article" date="2006" name="Eukaryot. Cell">
        <title>Endoplasmic reticulum-associated degradation is required for cold adaptation and regulation of sterol biosynthesis in the yeast Saccharomyces cerevisiae.</title>
        <authorList>
            <person name="Loertscher J."/>
            <person name="Larson L.L."/>
            <person name="Matson C.K."/>
            <person name="Parrish M.L."/>
            <person name="Felthauser A."/>
            <person name="Sturm A."/>
            <person name="Tachibana C."/>
            <person name="Bard M."/>
            <person name="Wright R."/>
        </authorList>
    </citation>
    <scope>FUNCTION</scope>
</reference>
<reference key="19">
    <citation type="journal article" date="2006" name="Mol. Pharmacol.">
        <title>Endoplasmic reticulum-associated degradation of cytochrome P450 CYP3A4 in Saccharomyces cerevisiae: further characterization of cellular participants and structural determinants.</title>
        <authorList>
            <person name="Liao M."/>
            <person name="Faouzi S."/>
            <person name="Karyakin A."/>
            <person name="Correia M.A."/>
        </authorList>
    </citation>
    <scope>FUNCTION</scope>
</reference>
<accession>P38428</accession>
<accession>D6W090</accession>
<accession>Q03507</accession>